<feature type="chain" id="PRO_0000194504" description="Putative AraC-like transcription regulator">
    <location>
        <begin position="1"/>
        <end position="304"/>
    </location>
</feature>
<feature type="domain" description="HTH araC/xylS-type" evidence="1">
    <location>
        <begin position="202"/>
        <end position="300"/>
    </location>
</feature>
<feature type="DNA-binding region" description="H-T-H motif" evidence="1">
    <location>
        <begin position="219"/>
        <end position="240"/>
    </location>
</feature>
<feature type="DNA-binding region" description="H-T-H motif" evidence="1">
    <location>
        <begin position="267"/>
        <end position="290"/>
    </location>
</feature>
<sequence>MDPLEDVLTLLKTRSHLSASLVAGGRWAVRFDAPRVVKFNAVRRGTCQLEVDGIDEPIDLAEGDCYLLTRPRSFTLRSDPETAPVDGGVVFARAEDGIARAGQGDDVFLIGGGFSFGTRAQELLLDRLPPIVHVPADTPHAETVQWALTAIDQELTHRPMASTLIAEHLAVIMLVHVLRLHLERAPHAVSGWLAGLADPVVATALTCLHRDPARSWTVADLADTAAVSRSTLAARFKATVGQGPLEYLTRWRIELAARQLREGNATLASIAHSVGYGSESALSVAFKRVLGMPPGDYRKHPTMP</sequence>
<proteinExistence type="predicted"/>
<dbReference type="EMBL" id="Z11519">
    <property type="protein sequence ID" value="CAA77612.1"/>
    <property type="molecule type" value="Genomic_DNA"/>
</dbReference>
<dbReference type="PIR" id="E45277">
    <property type="entry name" value="E45277"/>
</dbReference>
<dbReference type="SMR" id="P35319"/>
<dbReference type="GO" id="GO:0003700">
    <property type="term" value="F:DNA-binding transcription factor activity"/>
    <property type="evidence" value="ECO:0007669"/>
    <property type="project" value="InterPro"/>
</dbReference>
<dbReference type="GO" id="GO:0043565">
    <property type="term" value="F:sequence-specific DNA binding"/>
    <property type="evidence" value="ECO:0007669"/>
    <property type="project" value="InterPro"/>
</dbReference>
<dbReference type="Gene3D" id="1.10.10.60">
    <property type="entry name" value="Homeodomain-like"/>
    <property type="match status" value="2"/>
</dbReference>
<dbReference type="InterPro" id="IPR032783">
    <property type="entry name" value="AraC_lig"/>
</dbReference>
<dbReference type="InterPro" id="IPR050204">
    <property type="entry name" value="AraC_XylS_family_regulators"/>
</dbReference>
<dbReference type="InterPro" id="IPR009057">
    <property type="entry name" value="Homeodomain-like_sf"/>
</dbReference>
<dbReference type="InterPro" id="IPR018060">
    <property type="entry name" value="HTH_AraC"/>
</dbReference>
<dbReference type="InterPro" id="IPR018062">
    <property type="entry name" value="HTH_AraC-typ_CS"/>
</dbReference>
<dbReference type="PANTHER" id="PTHR46796:SF13">
    <property type="entry name" value="HTH-TYPE TRANSCRIPTIONAL ACTIVATOR RHAS"/>
    <property type="match status" value="1"/>
</dbReference>
<dbReference type="PANTHER" id="PTHR46796">
    <property type="entry name" value="HTH-TYPE TRANSCRIPTIONAL ACTIVATOR RHAS-RELATED"/>
    <property type="match status" value="1"/>
</dbReference>
<dbReference type="Pfam" id="PF12852">
    <property type="entry name" value="Cupin_6"/>
    <property type="match status" value="1"/>
</dbReference>
<dbReference type="Pfam" id="PF12833">
    <property type="entry name" value="HTH_18"/>
    <property type="match status" value="1"/>
</dbReference>
<dbReference type="SMART" id="SM00342">
    <property type="entry name" value="HTH_ARAC"/>
    <property type="match status" value="1"/>
</dbReference>
<dbReference type="SUPFAM" id="SSF46689">
    <property type="entry name" value="Homeodomain-like"/>
    <property type="match status" value="2"/>
</dbReference>
<dbReference type="PROSITE" id="PS00041">
    <property type="entry name" value="HTH_ARAC_FAMILY_1"/>
    <property type="match status" value="1"/>
</dbReference>
<dbReference type="PROSITE" id="PS01124">
    <property type="entry name" value="HTH_ARAC_FAMILY_2"/>
    <property type="match status" value="1"/>
</dbReference>
<organism>
    <name type="scientific">Streptomyces lividans</name>
    <dbReference type="NCBI Taxonomy" id="1916"/>
    <lineage>
        <taxon>Bacteria</taxon>
        <taxon>Bacillati</taxon>
        <taxon>Actinomycetota</taxon>
        <taxon>Actinomycetes</taxon>
        <taxon>Kitasatosporales</taxon>
        <taxon>Streptomycetaceae</taxon>
        <taxon>Streptomyces</taxon>
    </lineage>
</organism>
<keyword id="KW-0238">DNA-binding</keyword>
<keyword id="KW-0804">Transcription</keyword>
<keyword id="KW-0805">Transcription regulation</keyword>
<keyword id="KW-0814">Transposable element</keyword>
<protein>
    <recommendedName>
        <fullName>Putative AraC-like transcription regulator</fullName>
    </recommendedName>
</protein>
<name>ARACL_STRLI</name>
<evidence type="ECO:0000255" key="1">
    <source>
        <dbReference type="PROSITE-ProRule" id="PRU00593"/>
    </source>
</evidence>
<reference key="1">
    <citation type="journal article" date="1992" name="J. Bacteriol.">
        <title>Discovery and characterization of a new transposable element, Tn4811, in Streptomyces lividans 66.</title>
        <authorList>
            <person name="Chen C.W."/>
            <person name="Yu T.-W."/>
            <person name="Chung H.-M."/>
            <person name="Chou C.-F."/>
        </authorList>
    </citation>
    <scope>NUCLEOTIDE SEQUENCE [GENOMIC DNA]</scope>
    <source>
        <strain>66 / 1326</strain>
        <transposon>Tn4811</transposon>
    </source>
</reference>
<accession>P35319</accession>